<gene>
    <name evidence="7" type="primary">SBT4.1</name>
    <name evidence="9" type="ordered locus">At2g39850</name>
    <name evidence="10" type="ORF">T5I7.15</name>
</gene>
<keyword id="KW-0068">Autocatalytic cleavage</keyword>
<keyword id="KW-0325">Glycoprotein</keyword>
<keyword id="KW-0378">Hydrolase</keyword>
<keyword id="KW-0645">Protease</keyword>
<keyword id="KW-1185">Reference proteome</keyword>
<keyword id="KW-0964">Secreted</keyword>
<keyword id="KW-0720">Serine protease</keyword>
<keyword id="KW-0732">Signal</keyword>
<keyword id="KW-0865">Zymogen</keyword>
<feature type="signal peptide" evidence="3">
    <location>
        <begin position="1"/>
        <end position="23"/>
    </location>
</feature>
<feature type="propeptide" id="PRO_0000435225" description="Activation peptide" evidence="1">
    <location>
        <begin position="24"/>
        <end position="106"/>
    </location>
</feature>
<feature type="chain" id="PRO_5003311433" description="Subtilisin-like protease SBT4.1" evidence="3">
    <location>
        <begin position="107"/>
        <end status="unknown"/>
    </location>
</feature>
<feature type="propeptide" id="PRO_0000435226" evidence="1">
    <location>
        <begin status="unknown"/>
        <end position="775"/>
    </location>
</feature>
<feature type="domain" description="Inhibitor I9" evidence="3">
    <location>
        <begin position="29"/>
        <end position="105"/>
    </location>
</feature>
<feature type="domain" description="Peptidase S8" evidence="5">
    <location>
        <begin position="110"/>
        <end position="606"/>
    </location>
</feature>
<feature type="domain" description="PA" evidence="3">
    <location>
        <begin position="365"/>
        <end position="459"/>
    </location>
</feature>
<feature type="active site" description="Charge relay system" evidence="5">
    <location>
        <position position="136"/>
    </location>
</feature>
<feature type="active site" description="Charge relay system" evidence="5">
    <location>
        <position position="196"/>
    </location>
</feature>
<feature type="active site" description="Charge relay system" evidence="5">
    <location>
        <position position="551"/>
    </location>
</feature>
<feature type="glycosylation site" description="N-linked (GlcNAc...) asparagine" evidence="4">
    <location>
        <position position="24"/>
    </location>
</feature>
<feature type="glycosylation site" description="N-linked (GlcNAc...) asparagine" evidence="4">
    <location>
        <position position="115"/>
    </location>
</feature>
<feature type="glycosylation site" description="N-linked (GlcNAc...) asparagine" evidence="4">
    <location>
        <position position="126"/>
    </location>
</feature>
<feature type="glycosylation site" description="N-linked (GlcNAc...) asparagine" evidence="4">
    <location>
        <position position="162"/>
    </location>
</feature>
<feature type="glycosylation site" description="N-linked (GlcNAc...) asparagine" evidence="4">
    <location>
        <position position="437"/>
    </location>
</feature>
<feature type="glycosylation site" description="N-linked (GlcNAc...) asparagine" evidence="4">
    <location>
        <position position="601"/>
    </location>
</feature>
<proteinExistence type="inferred from homology"/>
<reference key="1">
    <citation type="journal article" date="1999" name="Nature">
        <title>Sequence and analysis of chromosome 2 of the plant Arabidopsis thaliana.</title>
        <authorList>
            <person name="Lin X."/>
            <person name="Kaul S."/>
            <person name="Rounsley S.D."/>
            <person name="Shea T.P."/>
            <person name="Benito M.-I."/>
            <person name="Town C.D."/>
            <person name="Fujii C.Y."/>
            <person name="Mason T.M."/>
            <person name="Bowman C.L."/>
            <person name="Barnstead M.E."/>
            <person name="Feldblyum T.V."/>
            <person name="Buell C.R."/>
            <person name="Ketchum K.A."/>
            <person name="Lee J.J."/>
            <person name="Ronning C.M."/>
            <person name="Koo H.L."/>
            <person name="Moffat K.S."/>
            <person name="Cronin L.A."/>
            <person name="Shen M."/>
            <person name="Pai G."/>
            <person name="Van Aken S."/>
            <person name="Umayam L."/>
            <person name="Tallon L.J."/>
            <person name="Gill J.E."/>
            <person name="Adams M.D."/>
            <person name="Carrera A.J."/>
            <person name="Creasy T.H."/>
            <person name="Goodman H.M."/>
            <person name="Somerville C.R."/>
            <person name="Copenhaver G.P."/>
            <person name="Preuss D."/>
            <person name="Nierman W.C."/>
            <person name="White O."/>
            <person name="Eisen J.A."/>
            <person name="Salzberg S.L."/>
            <person name="Fraser C.M."/>
            <person name="Venter J.C."/>
        </authorList>
    </citation>
    <scope>NUCLEOTIDE SEQUENCE [LARGE SCALE GENOMIC DNA]</scope>
    <source>
        <strain>cv. Columbia</strain>
    </source>
</reference>
<reference key="2">
    <citation type="journal article" date="2017" name="Plant J.">
        <title>Araport11: a complete reannotation of the Arabidopsis thaliana reference genome.</title>
        <authorList>
            <person name="Cheng C.Y."/>
            <person name="Krishnakumar V."/>
            <person name="Chan A.P."/>
            <person name="Thibaud-Nissen F."/>
            <person name="Schobel S."/>
            <person name="Town C.D."/>
        </authorList>
    </citation>
    <scope>GENOME REANNOTATION</scope>
    <source>
        <strain>cv. Columbia</strain>
    </source>
</reference>
<reference key="3">
    <citation type="journal article" date="2005" name="PLoS Comput. Biol.">
        <title>Inferring hypotheses on functional relationships of genes: Analysis of the Arabidopsis thaliana subtilase gene family.</title>
        <authorList>
            <person name="Rautengarten C."/>
            <person name="Steinhauser D."/>
            <person name="Bussis D."/>
            <person name="Stintzi A."/>
            <person name="Schaller A."/>
            <person name="Kopka J."/>
            <person name="Altmann T."/>
        </authorList>
    </citation>
    <scope>GENE FAMILY</scope>
    <scope>NOMENCLATURE</scope>
</reference>
<dbReference type="EC" id="3.4.21.-" evidence="6"/>
<dbReference type="EMBL" id="AC003000">
    <property type="protein sequence ID" value="AAM14853.1"/>
    <property type="status" value="ALT_SEQ"/>
    <property type="molecule type" value="Genomic_DNA"/>
</dbReference>
<dbReference type="EMBL" id="CP002685">
    <property type="protein sequence ID" value="AEC09738.1"/>
    <property type="molecule type" value="Genomic_DNA"/>
</dbReference>
<dbReference type="RefSeq" id="NP_565915.2">
    <property type="nucleotide sequence ID" value="NM_129544.4"/>
</dbReference>
<dbReference type="SMR" id="F4IG09"/>
<dbReference type="STRING" id="3702.F4IG09"/>
<dbReference type="MEROPS" id="S08.A46"/>
<dbReference type="GlyCosmos" id="F4IG09">
    <property type="glycosylation" value="6 sites, No reported glycans"/>
</dbReference>
<dbReference type="GlyGen" id="F4IG09">
    <property type="glycosylation" value="6 sites"/>
</dbReference>
<dbReference type="iPTMnet" id="F4IG09"/>
<dbReference type="PaxDb" id="3702-AT2G39850.1"/>
<dbReference type="ProteomicsDB" id="232799"/>
<dbReference type="EnsemblPlants" id="AT2G39850.1">
    <property type="protein sequence ID" value="AT2G39850.1"/>
    <property type="gene ID" value="AT2G39850"/>
</dbReference>
<dbReference type="GeneID" id="818572"/>
<dbReference type="Gramene" id="AT2G39850.1">
    <property type="protein sequence ID" value="AT2G39850.1"/>
    <property type="gene ID" value="AT2G39850"/>
</dbReference>
<dbReference type="KEGG" id="ath:AT2G39850"/>
<dbReference type="Araport" id="AT2G39850"/>
<dbReference type="TAIR" id="AT2G39850"/>
<dbReference type="eggNOG" id="ENOG502QRA7">
    <property type="taxonomic scope" value="Eukaryota"/>
</dbReference>
<dbReference type="HOGENOM" id="CLU_000625_4_3_1"/>
<dbReference type="InParanoid" id="F4IG09"/>
<dbReference type="OMA" id="KCENITC"/>
<dbReference type="PRO" id="PR:F4IG09"/>
<dbReference type="Proteomes" id="UP000006548">
    <property type="component" value="Chromosome 2"/>
</dbReference>
<dbReference type="ExpressionAtlas" id="F4IG09">
    <property type="expression patterns" value="baseline and differential"/>
</dbReference>
<dbReference type="GO" id="GO:0005576">
    <property type="term" value="C:extracellular region"/>
    <property type="evidence" value="ECO:0007669"/>
    <property type="project" value="UniProtKB-SubCell"/>
</dbReference>
<dbReference type="GO" id="GO:0004252">
    <property type="term" value="F:serine-type endopeptidase activity"/>
    <property type="evidence" value="ECO:0007669"/>
    <property type="project" value="InterPro"/>
</dbReference>
<dbReference type="GO" id="GO:0006508">
    <property type="term" value="P:proteolysis"/>
    <property type="evidence" value="ECO:0007669"/>
    <property type="project" value="UniProtKB-KW"/>
</dbReference>
<dbReference type="FunFam" id="2.60.40.2310:FF:000003">
    <property type="entry name" value="Subtilisin-like protease SBT4.1"/>
    <property type="match status" value="1"/>
</dbReference>
<dbReference type="Gene3D" id="2.60.40.2310">
    <property type="match status" value="1"/>
</dbReference>
<dbReference type="Gene3D" id="3.50.30.30">
    <property type="match status" value="1"/>
</dbReference>
<dbReference type="Gene3D" id="3.30.70.80">
    <property type="entry name" value="Peptidase S8 propeptide/proteinase inhibitor I9"/>
    <property type="match status" value="1"/>
</dbReference>
<dbReference type="Gene3D" id="3.40.50.200">
    <property type="entry name" value="Peptidase S8/S53 domain"/>
    <property type="match status" value="1"/>
</dbReference>
<dbReference type="InterPro" id="IPR000209">
    <property type="entry name" value="Peptidase_S8/S53_dom"/>
</dbReference>
<dbReference type="InterPro" id="IPR036852">
    <property type="entry name" value="Peptidase_S8/S53_dom_sf"/>
</dbReference>
<dbReference type="InterPro" id="IPR022398">
    <property type="entry name" value="Peptidase_S8_His-AS"/>
</dbReference>
<dbReference type="InterPro" id="IPR023828">
    <property type="entry name" value="Peptidase_S8_Ser-AS"/>
</dbReference>
<dbReference type="InterPro" id="IPR015500">
    <property type="entry name" value="Peptidase_S8_subtilisin-rel"/>
</dbReference>
<dbReference type="InterPro" id="IPR010259">
    <property type="entry name" value="S8pro/Inhibitor_I9"/>
</dbReference>
<dbReference type="InterPro" id="IPR037045">
    <property type="entry name" value="S8pro/Inhibitor_I9_sf"/>
</dbReference>
<dbReference type="InterPro" id="IPR045051">
    <property type="entry name" value="SBT"/>
</dbReference>
<dbReference type="InterPro" id="IPR041469">
    <property type="entry name" value="Subtilisin-like_FN3"/>
</dbReference>
<dbReference type="PANTHER" id="PTHR10795">
    <property type="entry name" value="PROPROTEIN CONVERTASE SUBTILISIN/KEXIN"/>
    <property type="match status" value="1"/>
</dbReference>
<dbReference type="Pfam" id="PF17766">
    <property type="entry name" value="fn3_6"/>
    <property type="match status" value="1"/>
</dbReference>
<dbReference type="Pfam" id="PF05922">
    <property type="entry name" value="Inhibitor_I9"/>
    <property type="match status" value="1"/>
</dbReference>
<dbReference type="Pfam" id="PF00082">
    <property type="entry name" value="Peptidase_S8"/>
    <property type="match status" value="1"/>
</dbReference>
<dbReference type="PRINTS" id="PR00723">
    <property type="entry name" value="SUBTILISIN"/>
</dbReference>
<dbReference type="SUPFAM" id="SSF52743">
    <property type="entry name" value="Subtilisin-like"/>
    <property type="match status" value="1"/>
</dbReference>
<dbReference type="PROSITE" id="PS51892">
    <property type="entry name" value="SUBTILASE"/>
    <property type="match status" value="1"/>
</dbReference>
<dbReference type="PROSITE" id="PS00137">
    <property type="entry name" value="SUBTILASE_HIS"/>
    <property type="match status" value="1"/>
</dbReference>
<dbReference type="PROSITE" id="PS00138">
    <property type="entry name" value="SUBTILASE_SER"/>
    <property type="match status" value="1"/>
</dbReference>
<sequence>MAIAFHTFLLQLLLFFFASFAEANDSRKTYLVQMKVGGHRYGSSSGHQELLGEVLDDDSTLADAFIYSYKESFTGFSASLTPRERQKLMRRREVLEVSRSRNLKLQTTRSWDFMNLTLKAERNPENESDLVVAVIDSGIWPYSELFGSDSPPPPGWENKCENITCNNKIVGARSYYPKKEKYKWVEEKSVIDVTGHGTHVASIVAGRKVEKAGYFGLAEGTMRGGVPNAKIAVYKTCWRVIRKNGREDSVCREDNILKAIDDAIADKVDIISYSQGFQFTPLQKDKVSWAFLRALKNGILTSAAAGNYANNGKFYYTVANGAPWVMTVAASLKDRIFETKLELEGEDKPIIVYDTINTFETQDSFYPLLNEKAPPESTRKRELIAERNGYSILSNYDEKDKGKDVFFEFAQINLLDEAIKEREKGAIVLGGKSYDFNESIKLQFPIASIFLDEQKKGKLWDYYKKDQSKERLAKIHKTEEIPREEGWVPTVAHLSSRGPNCDSFLANILKPDIAAPGLDIIAGWPENVKLSSDRPANDYRHLRFNIMSGTSMACPHATGLALYLKSFKRWSPSAIKSALMTTSSEMTDDDNEFAYGSGHLNATKVRDPGLVYETHYQDYIDYLCKLGYNTEKLRSHVGSDKIDCSKTEIDHDADLNYPTMTARVPLPLDTPFKKVFHRTVTNVNDGEFTYLREINYRGDKDFDEIIVDPPQLKFSELGETKTFTVTVTGISKRNWNKNRAFMTRNTWLTWTEKDGSRQVRSPIVIYSIKGPKACM</sequence>
<accession>F4IG09</accession>
<accession>Q8S8T2</accession>
<organism evidence="11">
    <name type="scientific">Arabidopsis thaliana</name>
    <name type="common">Mouse-ear cress</name>
    <dbReference type="NCBI Taxonomy" id="3702"/>
    <lineage>
        <taxon>Eukaryota</taxon>
        <taxon>Viridiplantae</taxon>
        <taxon>Streptophyta</taxon>
        <taxon>Embryophyta</taxon>
        <taxon>Tracheophyta</taxon>
        <taxon>Spermatophyta</taxon>
        <taxon>Magnoliopsida</taxon>
        <taxon>eudicotyledons</taxon>
        <taxon>Gunneridae</taxon>
        <taxon>Pentapetalae</taxon>
        <taxon>rosids</taxon>
        <taxon>malvids</taxon>
        <taxon>Brassicales</taxon>
        <taxon>Brassicaceae</taxon>
        <taxon>Camelineae</taxon>
        <taxon>Arabidopsis</taxon>
    </lineage>
</organism>
<protein>
    <recommendedName>
        <fullName evidence="7">Subtilisin-like protease SBT4.1</fullName>
        <ecNumber evidence="6">3.4.21.-</ecNumber>
    </recommendedName>
    <alternativeName>
        <fullName evidence="7">Subtilase subfamily 4 member 1</fullName>
        <shortName evidence="7">AtSBT4.1</shortName>
    </alternativeName>
</protein>
<comment type="subcellular location">
    <subcellularLocation>
        <location evidence="2">Secreted</location>
    </subcellularLocation>
</comment>
<comment type="PTM">
    <text evidence="1">The C-terminal propeptide is autocleaved.</text>
</comment>
<comment type="similarity">
    <text evidence="8">Belongs to the peptidase S8 family.</text>
</comment>
<comment type="sequence caution" evidence="8">
    <conflict type="erroneous gene model prediction">
        <sequence resource="EMBL-CDS" id="AAM14853"/>
    </conflict>
</comment>
<evidence type="ECO:0000250" key="1">
    <source>
        <dbReference type="UniProtKB" id="Q39547"/>
    </source>
</evidence>
<evidence type="ECO:0000250" key="2">
    <source>
        <dbReference type="UniProtKB" id="Q84WS0"/>
    </source>
</evidence>
<evidence type="ECO:0000255" key="3"/>
<evidence type="ECO:0000255" key="4">
    <source>
        <dbReference type="PROSITE-ProRule" id="PRU00498"/>
    </source>
</evidence>
<evidence type="ECO:0000255" key="5">
    <source>
        <dbReference type="PROSITE-ProRule" id="PRU01240"/>
    </source>
</evidence>
<evidence type="ECO:0000255" key="6">
    <source>
        <dbReference type="PROSITE-ProRule" id="PRU10082"/>
    </source>
</evidence>
<evidence type="ECO:0000303" key="7">
    <source>
    </source>
</evidence>
<evidence type="ECO:0000305" key="8"/>
<evidence type="ECO:0000312" key="9">
    <source>
        <dbReference type="Araport" id="AT2G39850"/>
    </source>
</evidence>
<evidence type="ECO:0000312" key="10">
    <source>
        <dbReference type="EMBL" id="AAM14853.1"/>
    </source>
</evidence>
<evidence type="ECO:0000312" key="11">
    <source>
        <dbReference type="Proteomes" id="UP000006548"/>
    </source>
</evidence>
<name>SBT41_ARATH</name>